<dbReference type="EC" id="5.3.1.16" evidence="1"/>
<dbReference type="EMBL" id="CP001338">
    <property type="protein sequence ID" value="ACL17053.1"/>
    <property type="molecule type" value="Genomic_DNA"/>
</dbReference>
<dbReference type="RefSeq" id="WP_012618372.1">
    <property type="nucleotide sequence ID" value="NC_011832.1"/>
</dbReference>
<dbReference type="SMR" id="B8GJY2"/>
<dbReference type="STRING" id="521011.Mpal_1746"/>
<dbReference type="GeneID" id="7271205"/>
<dbReference type="KEGG" id="mpl:Mpal_1746"/>
<dbReference type="eggNOG" id="arCOG00618">
    <property type="taxonomic scope" value="Archaea"/>
</dbReference>
<dbReference type="HOGENOM" id="CLU_048577_1_1_2"/>
<dbReference type="OrthoDB" id="52866at2157"/>
<dbReference type="UniPathway" id="UPA00031">
    <property type="reaction ID" value="UER00009"/>
</dbReference>
<dbReference type="Proteomes" id="UP000002457">
    <property type="component" value="Chromosome"/>
</dbReference>
<dbReference type="GO" id="GO:0005737">
    <property type="term" value="C:cytoplasm"/>
    <property type="evidence" value="ECO:0007669"/>
    <property type="project" value="UniProtKB-SubCell"/>
</dbReference>
<dbReference type="GO" id="GO:0003949">
    <property type="term" value="F:1-(5-phosphoribosyl)-5-[(5-phosphoribosylamino)methylideneamino]imidazole-4-carboxamide isomerase activity"/>
    <property type="evidence" value="ECO:0007669"/>
    <property type="project" value="UniProtKB-UniRule"/>
</dbReference>
<dbReference type="GO" id="GO:0000105">
    <property type="term" value="P:L-histidine biosynthetic process"/>
    <property type="evidence" value="ECO:0007669"/>
    <property type="project" value="UniProtKB-UniRule"/>
</dbReference>
<dbReference type="GO" id="GO:0000162">
    <property type="term" value="P:L-tryptophan biosynthetic process"/>
    <property type="evidence" value="ECO:0007669"/>
    <property type="project" value="TreeGrafter"/>
</dbReference>
<dbReference type="CDD" id="cd04732">
    <property type="entry name" value="HisA"/>
    <property type="match status" value="1"/>
</dbReference>
<dbReference type="FunFam" id="3.20.20.70:FF:000009">
    <property type="entry name" value="1-(5-phosphoribosyl)-5-[(5-phosphoribosylamino)methylideneamino] imidazole-4-carboxamide isomerase"/>
    <property type="match status" value="1"/>
</dbReference>
<dbReference type="Gene3D" id="3.20.20.70">
    <property type="entry name" value="Aldolase class I"/>
    <property type="match status" value="1"/>
</dbReference>
<dbReference type="HAMAP" id="MF_01014">
    <property type="entry name" value="HisA"/>
    <property type="match status" value="1"/>
</dbReference>
<dbReference type="InterPro" id="IPR013785">
    <property type="entry name" value="Aldolase_TIM"/>
</dbReference>
<dbReference type="InterPro" id="IPR006062">
    <property type="entry name" value="His_biosynth"/>
</dbReference>
<dbReference type="InterPro" id="IPR044524">
    <property type="entry name" value="Isoase_HisA-like"/>
</dbReference>
<dbReference type="InterPro" id="IPR023016">
    <property type="entry name" value="Isoase_HisA-like_bact"/>
</dbReference>
<dbReference type="InterPro" id="IPR011060">
    <property type="entry name" value="RibuloseP-bd_barrel"/>
</dbReference>
<dbReference type="NCBIfam" id="NF010112">
    <property type="entry name" value="PRK13585.1"/>
    <property type="match status" value="1"/>
</dbReference>
<dbReference type="PANTHER" id="PTHR43090">
    <property type="entry name" value="1-(5-PHOSPHORIBOSYL)-5-[(5-PHOSPHORIBOSYLAMINO)METHYLIDENEAMINO] IMIDAZOLE-4-CARBOXAMIDE ISOMERASE"/>
    <property type="match status" value="1"/>
</dbReference>
<dbReference type="PANTHER" id="PTHR43090:SF7">
    <property type="entry name" value="1-(5-PHOSPHORIBOSYL)-5-[(5-PHOSPHORIBOSYLAMINO)METHYLIDENEAMINO] IMIDAZOLE-4-CARBOXAMIDE ISOMERASE"/>
    <property type="match status" value="1"/>
</dbReference>
<dbReference type="Pfam" id="PF00977">
    <property type="entry name" value="His_biosynth"/>
    <property type="match status" value="1"/>
</dbReference>
<dbReference type="SUPFAM" id="SSF51366">
    <property type="entry name" value="Ribulose-phoshate binding barrel"/>
    <property type="match status" value="1"/>
</dbReference>
<feature type="chain" id="PRO_1000148977" description="1-(5-phosphoribosyl)-5-[(5-phosphoribosylamino)methylideneamino] imidazole-4-carboxamide isomerase">
    <location>
        <begin position="1"/>
        <end position="236"/>
    </location>
</feature>
<feature type="active site" description="Proton acceptor" evidence="1">
    <location>
        <position position="8"/>
    </location>
</feature>
<feature type="active site" description="Proton donor" evidence="1">
    <location>
        <position position="129"/>
    </location>
</feature>
<accession>B8GJY2</accession>
<protein>
    <recommendedName>
        <fullName evidence="1">1-(5-phosphoribosyl)-5-[(5-phosphoribosylamino)methylideneamino] imidazole-4-carboxamide isomerase</fullName>
        <ecNumber evidence="1">5.3.1.16</ecNumber>
    </recommendedName>
    <alternativeName>
        <fullName evidence="1">Phosphoribosylformimino-5-aminoimidazole carboxamide ribotide isomerase</fullName>
    </alternativeName>
</protein>
<name>HIS4_METPE</name>
<comment type="catalytic activity">
    <reaction evidence="1">
        <text>1-(5-phospho-beta-D-ribosyl)-5-[(5-phospho-beta-D-ribosylamino)methylideneamino]imidazole-4-carboxamide = 5-[(5-phospho-1-deoxy-D-ribulos-1-ylimino)methylamino]-1-(5-phospho-beta-D-ribosyl)imidazole-4-carboxamide</text>
        <dbReference type="Rhea" id="RHEA:15469"/>
        <dbReference type="ChEBI" id="CHEBI:58435"/>
        <dbReference type="ChEBI" id="CHEBI:58525"/>
        <dbReference type="EC" id="5.3.1.16"/>
    </reaction>
</comment>
<comment type="pathway">
    <text evidence="1">Amino-acid biosynthesis; L-histidine biosynthesis; L-histidine from 5-phospho-alpha-D-ribose 1-diphosphate: step 4/9.</text>
</comment>
<comment type="subcellular location">
    <subcellularLocation>
        <location evidence="1">Cytoplasm</location>
    </subcellularLocation>
</comment>
<comment type="similarity">
    <text evidence="1">Belongs to the HisA/HisF family.</text>
</comment>
<sequence>MKVFPAVDILGGRCVQLVQGRRESATDFGDPLSCATQWLEEGATALHVINLDGAFGKAQANAALIRDLVDVTGVEVQLGGGIRSIADATAWLETGVDRIIIGTLATEHPEVLGTLASEYGGARIMAGVDARDGQIAVEGWQQTRGNFCTWATRFEEQGAGSLLYTNVDIEGLQQGVRLDPVKELIRMVSIPVVVAGGVSSPADLQGLHQAGVAGAVLGSALYSGKITLEEALKAIQ</sequence>
<evidence type="ECO:0000255" key="1">
    <source>
        <dbReference type="HAMAP-Rule" id="MF_01014"/>
    </source>
</evidence>
<proteinExistence type="inferred from homology"/>
<reference key="1">
    <citation type="journal article" date="2015" name="Genome Announc.">
        <title>Complete Genome Sequence of Methanosphaerula palustris E1-9CT, a Hydrogenotrophic Methanogen Isolated from a Minerotrophic Fen Peatland.</title>
        <authorList>
            <person name="Cadillo-Quiroz H."/>
            <person name="Browne P."/>
            <person name="Kyrpides N."/>
            <person name="Woyke T."/>
            <person name="Goodwin L."/>
            <person name="Detter C."/>
            <person name="Yavitt J.B."/>
            <person name="Zinder S.H."/>
        </authorList>
    </citation>
    <scope>NUCLEOTIDE SEQUENCE [LARGE SCALE GENOMIC DNA]</scope>
    <source>
        <strain>ATCC BAA-1556 / DSM 19958 / E1-9c</strain>
    </source>
</reference>
<gene>
    <name evidence="1" type="primary">hisA</name>
    <name type="ordered locus">Mpal_1746</name>
</gene>
<keyword id="KW-0028">Amino-acid biosynthesis</keyword>
<keyword id="KW-0963">Cytoplasm</keyword>
<keyword id="KW-0368">Histidine biosynthesis</keyword>
<keyword id="KW-0413">Isomerase</keyword>
<keyword id="KW-1185">Reference proteome</keyword>
<organism>
    <name type="scientific">Methanosphaerula palustris (strain ATCC BAA-1556 / DSM 19958 / E1-9c)</name>
    <dbReference type="NCBI Taxonomy" id="521011"/>
    <lineage>
        <taxon>Archaea</taxon>
        <taxon>Methanobacteriati</taxon>
        <taxon>Methanobacteriota</taxon>
        <taxon>Stenosarchaea group</taxon>
        <taxon>Methanomicrobia</taxon>
        <taxon>Methanomicrobiales</taxon>
        <taxon>Methanoregulaceae</taxon>
        <taxon>Methanosphaerula</taxon>
    </lineage>
</organism>